<feature type="propeptide" id="PRO_0000415018" evidence="1">
    <location>
        <begin position="1" status="less than"/>
        <end position="1"/>
    </location>
</feature>
<feature type="peptide" id="PRO_0000415019" description="Conotoxin Cl14b" evidence="6">
    <location>
        <begin position="5"/>
        <end position="20"/>
    </location>
</feature>
<feature type="region of interest" description="Disordered" evidence="2">
    <location>
        <begin position="1"/>
        <end position="20"/>
    </location>
</feature>
<feature type="non-terminal residue" evidence="6">
    <location>
        <position position="1"/>
    </location>
</feature>
<protein>
    <recommendedName>
        <fullName evidence="4">Conotoxin Cl14b</fullName>
    </recommendedName>
    <alternativeName>
        <fullName evidence="4">Conotoxin Cl14.3</fullName>
    </alternativeName>
</protein>
<dbReference type="EMBL" id="FJ959134">
    <property type="protein sequence ID" value="ADB93104.1"/>
    <property type="molecule type" value="Genomic_DNA"/>
</dbReference>
<dbReference type="ConoServer" id="4019">
    <property type="toxin name" value="Cal14.3 precursor"/>
</dbReference>
<dbReference type="GO" id="GO:0005576">
    <property type="term" value="C:extracellular region"/>
    <property type="evidence" value="ECO:0007669"/>
    <property type="project" value="UniProtKB-SubCell"/>
</dbReference>
<dbReference type="GO" id="GO:0090729">
    <property type="term" value="F:toxin activity"/>
    <property type="evidence" value="ECO:0007669"/>
    <property type="project" value="UniProtKB-KW"/>
</dbReference>
<organism>
    <name type="scientific">Californiconus californicus</name>
    <name type="common">California cone</name>
    <name type="synonym">Conus californicus</name>
    <dbReference type="NCBI Taxonomy" id="1736779"/>
    <lineage>
        <taxon>Eukaryota</taxon>
        <taxon>Metazoa</taxon>
        <taxon>Spiralia</taxon>
        <taxon>Lophotrochozoa</taxon>
        <taxon>Mollusca</taxon>
        <taxon>Gastropoda</taxon>
        <taxon>Caenogastropoda</taxon>
        <taxon>Neogastropoda</taxon>
        <taxon>Conoidea</taxon>
        <taxon>Conidae</taxon>
        <taxon>Californiconus</taxon>
    </lineage>
</organism>
<comment type="subcellular location">
    <subcellularLocation>
        <location evidence="3">Secreted</location>
    </subcellularLocation>
</comment>
<comment type="tissue specificity">
    <text evidence="6">Expressed by the venom duct.</text>
</comment>
<comment type="domain">
    <text evidence="5">The cysteine framework is XIV (C-C-C-C).</text>
</comment>
<comment type="PTM">
    <text evidence="5">Contains 2 disulfide bonds.</text>
</comment>
<reference key="1">
    <citation type="journal article" date="2010" name="Mol. Phylogenet. Evol.">
        <title>Evolution of Conus peptide toxins: analysis of Conus californicus Reeve, 1844.</title>
        <authorList>
            <person name="Biggs J.S."/>
            <person name="Watkins M."/>
            <person name="Puillandre N."/>
            <person name="Ownby J.P."/>
            <person name="Lopez-Vera E."/>
            <person name="Christensen S."/>
            <person name="Moreno K.J."/>
            <person name="Bernaldez J."/>
            <person name="Licea-Navarro A."/>
            <person name="Corneli P.S."/>
            <person name="Olivera B.M."/>
        </authorList>
    </citation>
    <scope>NUCLEOTIDE SEQUENCE [GENOMIC DNA]</scope>
    <scope>PROTEIN SEQUENCE OF 4-20</scope>
    <scope>SUBCELLULAR LOCATION</scope>
    <source>
        <tissue>Venom</tissue>
    </source>
</reference>
<name>CLEB_CONCL</name>
<sequence length="20" mass="2384">YRRRQCPPWCSGEPCRKGTC</sequence>
<proteinExistence type="evidence at protein level"/>
<keyword id="KW-0165">Cleavage on pair of basic residues</keyword>
<keyword id="KW-0903">Direct protein sequencing</keyword>
<keyword id="KW-1015">Disulfide bond</keyword>
<keyword id="KW-0528">Neurotoxin</keyword>
<keyword id="KW-0964">Secreted</keyword>
<keyword id="KW-0800">Toxin</keyword>
<accession>D6C4J2</accession>
<evidence type="ECO:0000250" key="1"/>
<evidence type="ECO:0000256" key="2">
    <source>
        <dbReference type="SAM" id="MobiDB-lite"/>
    </source>
</evidence>
<evidence type="ECO:0000269" key="3">
    <source>
    </source>
</evidence>
<evidence type="ECO:0000303" key="4">
    <source>
    </source>
</evidence>
<evidence type="ECO:0000305" key="5"/>
<evidence type="ECO:0000305" key="6">
    <source>
    </source>
</evidence>